<feature type="chain" id="PRO_0000182841" description="Deoxyuridine 5'-triphosphate nucleotidohydrolase">
    <location>
        <begin position="1"/>
        <end position="148"/>
    </location>
</feature>
<feature type="binding site" evidence="1">
    <location>
        <begin position="67"/>
        <end position="69"/>
    </location>
    <ligand>
        <name>substrate</name>
    </ligand>
</feature>
<feature type="binding site" evidence="1">
    <location>
        <position position="80"/>
    </location>
    <ligand>
        <name>substrate</name>
    </ligand>
</feature>
<feature type="binding site" evidence="1">
    <location>
        <begin position="84"/>
        <end position="86"/>
    </location>
    <ligand>
        <name>substrate</name>
    </ligand>
</feature>
<feature type="binding site" evidence="1">
    <location>
        <position position="94"/>
    </location>
    <ligand>
        <name>substrate</name>
    </ligand>
</feature>
<protein>
    <recommendedName>
        <fullName evidence="1">Deoxyuridine 5'-triphosphate nucleotidohydrolase</fullName>
        <shortName evidence="1">dUTPase</shortName>
        <ecNumber evidence="1">3.6.1.23</ecNumber>
    </recommendedName>
    <alternativeName>
        <fullName evidence="1">dUTP pyrophosphatase</fullName>
    </alternativeName>
</protein>
<name>DUT_BURPS</name>
<keyword id="KW-0378">Hydrolase</keyword>
<keyword id="KW-0460">Magnesium</keyword>
<keyword id="KW-0479">Metal-binding</keyword>
<keyword id="KW-0546">Nucleotide metabolism</keyword>
<keyword id="KW-1185">Reference proteome</keyword>
<sequence>MKLDLKILDARMRDYLPKYATTGSAGLDLRACLDAPVTLKPGDTALVPTGLAIHLADPGYAALILPRSGLGHKHGIVLGNLVGLIDSDYQGELMISTWNRGQTEFALNPFERLAQLVIVPVVQARFNLVDDFAQSERGAGGFGSTGRG</sequence>
<evidence type="ECO:0000255" key="1">
    <source>
        <dbReference type="HAMAP-Rule" id="MF_00116"/>
    </source>
</evidence>
<dbReference type="EC" id="3.6.1.23" evidence="1"/>
<dbReference type="EMBL" id="BX571965">
    <property type="protein sequence ID" value="CAH34897.1"/>
    <property type="molecule type" value="Genomic_DNA"/>
</dbReference>
<dbReference type="RefSeq" id="WP_004186718.1">
    <property type="nucleotide sequence ID" value="NZ_CP009538.1"/>
</dbReference>
<dbReference type="RefSeq" id="YP_107530.1">
    <property type="nucleotide sequence ID" value="NC_006350.1"/>
</dbReference>
<dbReference type="SMR" id="Q63WI6"/>
<dbReference type="STRING" id="272560.BPSL0903"/>
<dbReference type="GeneID" id="93059416"/>
<dbReference type="KEGG" id="bps:BPSL0903"/>
<dbReference type="PATRIC" id="fig|272560.51.peg.679"/>
<dbReference type="eggNOG" id="COG0756">
    <property type="taxonomic scope" value="Bacteria"/>
</dbReference>
<dbReference type="UniPathway" id="UPA00610">
    <property type="reaction ID" value="UER00666"/>
</dbReference>
<dbReference type="Proteomes" id="UP000000605">
    <property type="component" value="Chromosome 1"/>
</dbReference>
<dbReference type="GO" id="GO:0004170">
    <property type="term" value="F:dUTP diphosphatase activity"/>
    <property type="evidence" value="ECO:0007669"/>
    <property type="project" value="UniProtKB-UniRule"/>
</dbReference>
<dbReference type="GO" id="GO:0000287">
    <property type="term" value="F:magnesium ion binding"/>
    <property type="evidence" value="ECO:0007669"/>
    <property type="project" value="UniProtKB-UniRule"/>
</dbReference>
<dbReference type="GO" id="GO:0006226">
    <property type="term" value="P:dUMP biosynthetic process"/>
    <property type="evidence" value="ECO:0007669"/>
    <property type="project" value="UniProtKB-UniRule"/>
</dbReference>
<dbReference type="GO" id="GO:0046081">
    <property type="term" value="P:dUTP catabolic process"/>
    <property type="evidence" value="ECO:0007669"/>
    <property type="project" value="InterPro"/>
</dbReference>
<dbReference type="CDD" id="cd07557">
    <property type="entry name" value="trimeric_dUTPase"/>
    <property type="match status" value="1"/>
</dbReference>
<dbReference type="FunFam" id="2.70.40.10:FF:000002">
    <property type="entry name" value="dUTP diphosphatase"/>
    <property type="match status" value="1"/>
</dbReference>
<dbReference type="Gene3D" id="2.70.40.10">
    <property type="match status" value="1"/>
</dbReference>
<dbReference type="HAMAP" id="MF_00116">
    <property type="entry name" value="dUTPase_bact"/>
    <property type="match status" value="1"/>
</dbReference>
<dbReference type="InterPro" id="IPR008181">
    <property type="entry name" value="dUTPase"/>
</dbReference>
<dbReference type="InterPro" id="IPR029054">
    <property type="entry name" value="dUTPase-like"/>
</dbReference>
<dbReference type="InterPro" id="IPR036157">
    <property type="entry name" value="dUTPase-like_sf"/>
</dbReference>
<dbReference type="InterPro" id="IPR033704">
    <property type="entry name" value="dUTPase_trimeric"/>
</dbReference>
<dbReference type="NCBIfam" id="TIGR00576">
    <property type="entry name" value="dut"/>
    <property type="match status" value="1"/>
</dbReference>
<dbReference type="NCBIfam" id="NF001862">
    <property type="entry name" value="PRK00601.1"/>
    <property type="match status" value="1"/>
</dbReference>
<dbReference type="PANTHER" id="PTHR11241">
    <property type="entry name" value="DEOXYURIDINE 5'-TRIPHOSPHATE NUCLEOTIDOHYDROLASE"/>
    <property type="match status" value="1"/>
</dbReference>
<dbReference type="PANTHER" id="PTHR11241:SF0">
    <property type="entry name" value="DEOXYURIDINE 5'-TRIPHOSPHATE NUCLEOTIDOHYDROLASE"/>
    <property type="match status" value="1"/>
</dbReference>
<dbReference type="Pfam" id="PF00692">
    <property type="entry name" value="dUTPase"/>
    <property type="match status" value="1"/>
</dbReference>
<dbReference type="SUPFAM" id="SSF51283">
    <property type="entry name" value="dUTPase-like"/>
    <property type="match status" value="1"/>
</dbReference>
<organism>
    <name type="scientific">Burkholderia pseudomallei (strain K96243)</name>
    <dbReference type="NCBI Taxonomy" id="272560"/>
    <lineage>
        <taxon>Bacteria</taxon>
        <taxon>Pseudomonadati</taxon>
        <taxon>Pseudomonadota</taxon>
        <taxon>Betaproteobacteria</taxon>
        <taxon>Burkholderiales</taxon>
        <taxon>Burkholderiaceae</taxon>
        <taxon>Burkholderia</taxon>
        <taxon>pseudomallei group</taxon>
    </lineage>
</organism>
<reference key="1">
    <citation type="journal article" date="2004" name="Proc. Natl. Acad. Sci. U.S.A.">
        <title>Genomic plasticity of the causative agent of melioidosis, Burkholderia pseudomallei.</title>
        <authorList>
            <person name="Holden M.T.G."/>
            <person name="Titball R.W."/>
            <person name="Peacock S.J."/>
            <person name="Cerdeno-Tarraga A.-M."/>
            <person name="Atkins T."/>
            <person name="Crossman L.C."/>
            <person name="Pitt T."/>
            <person name="Churcher C."/>
            <person name="Mungall K.L."/>
            <person name="Bentley S.D."/>
            <person name="Sebaihia M."/>
            <person name="Thomson N.R."/>
            <person name="Bason N."/>
            <person name="Beacham I.R."/>
            <person name="Brooks K."/>
            <person name="Brown K.A."/>
            <person name="Brown N.F."/>
            <person name="Challis G.L."/>
            <person name="Cherevach I."/>
            <person name="Chillingworth T."/>
            <person name="Cronin A."/>
            <person name="Crossett B."/>
            <person name="Davis P."/>
            <person name="DeShazer D."/>
            <person name="Feltwell T."/>
            <person name="Fraser A."/>
            <person name="Hance Z."/>
            <person name="Hauser H."/>
            <person name="Holroyd S."/>
            <person name="Jagels K."/>
            <person name="Keith K.E."/>
            <person name="Maddison M."/>
            <person name="Moule S."/>
            <person name="Price C."/>
            <person name="Quail M.A."/>
            <person name="Rabbinowitsch E."/>
            <person name="Rutherford K."/>
            <person name="Sanders M."/>
            <person name="Simmonds M."/>
            <person name="Songsivilai S."/>
            <person name="Stevens K."/>
            <person name="Tumapa S."/>
            <person name="Vesaratchavest M."/>
            <person name="Whitehead S."/>
            <person name="Yeats C."/>
            <person name="Barrell B.G."/>
            <person name="Oyston P.C.F."/>
            <person name="Parkhill J."/>
        </authorList>
    </citation>
    <scope>NUCLEOTIDE SEQUENCE [LARGE SCALE GENOMIC DNA]</scope>
    <source>
        <strain>K96243</strain>
    </source>
</reference>
<proteinExistence type="inferred from homology"/>
<gene>
    <name evidence="1" type="primary">dut</name>
    <name type="ordered locus">BPSL0903</name>
</gene>
<comment type="function">
    <text evidence="1">This enzyme is involved in nucleotide metabolism: it produces dUMP, the immediate precursor of thymidine nucleotides and it decreases the intracellular concentration of dUTP so that uracil cannot be incorporated into DNA.</text>
</comment>
<comment type="catalytic activity">
    <reaction evidence="1">
        <text>dUTP + H2O = dUMP + diphosphate + H(+)</text>
        <dbReference type="Rhea" id="RHEA:10248"/>
        <dbReference type="ChEBI" id="CHEBI:15377"/>
        <dbReference type="ChEBI" id="CHEBI:15378"/>
        <dbReference type="ChEBI" id="CHEBI:33019"/>
        <dbReference type="ChEBI" id="CHEBI:61555"/>
        <dbReference type="ChEBI" id="CHEBI:246422"/>
        <dbReference type="EC" id="3.6.1.23"/>
    </reaction>
</comment>
<comment type="cofactor">
    <cofactor evidence="1">
        <name>Mg(2+)</name>
        <dbReference type="ChEBI" id="CHEBI:18420"/>
    </cofactor>
</comment>
<comment type="pathway">
    <text evidence="1">Pyrimidine metabolism; dUMP biosynthesis; dUMP from dCTP (dUTP route): step 2/2.</text>
</comment>
<comment type="similarity">
    <text evidence="1">Belongs to the dUTPase family.</text>
</comment>
<accession>Q63WI6</accession>